<evidence type="ECO:0000255" key="1">
    <source>
        <dbReference type="HAMAP-Rule" id="MF_00270"/>
    </source>
</evidence>
<evidence type="ECO:0000305" key="2"/>
<feature type="chain" id="PRO_0000345443" description="Small ribosomal subunit protein bS18">
    <location>
        <begin position="1"/>
        <end position="79"/>
    </location>
</feature>
<comment type="function">
    <text evidence="1">Binds as a heterodimer with protein bS6 to the central domain of the 16S rRNA, where it helps stabilize the platform of the 30S subunit.</text>
</comment>
<comment type="subunit">
    <text evidence="1">Part of the 30S ribosomal subunit. Forms a tight heterodimer with protein bS6.</text>
</comment>
<comment type="similarity">
    <text evidence="1">Belongs to the bacterial ribosomal protein bS18 family.</text>
</comment>
<comment type="sequence caution" evidence="2">
    <conflict type="erroneous initiation">
        <sequence resource="EMBL-CDS" id="ABS76123"/>
    </conflict>
</comment>
<gene>
    <name evidence="1" type="primary">rpsR</name>
    <name type="ordered locus">RBAM_037980</name>
</gene>
<proteinExistence type="inferred from homology"/>
<reference key="1">
    <citation type="journal article" date="2007" name="Nat. Biotechnol.">
        <title>Comparative analysis of the complete genome sequence of the plant growth-promoting bacterium Bacillus amyloliquefaciens FZB42.</title>
        <authorList>
            <person name="Chen X.H."/>
            <person name="Koumoutsi A."/>
            <person name="Scholz R."/>
            <person name="Eisenreich A."/>
            <person name="Schneider K."/>
            <person name="Heinemeyer I."/>
            <person name="Morgenstern B."/>
            <person name="Voss B."/>
            <person name="Hess W.R."/>
            <person name="Reva O."/>
            <person name="Junge H."/>
            <person name="Voigt B."/>
            <person name="Jungblut P.R."/>
            <person name="Vater J."/>
            <person name="Suessmuth R."/>
            <person name="Liesegang H."/>
            <person name="Strittmatter A."/>
            <person name="Gottschalk G."/>
            <person name="Borriss R."/>
        </authorList>
    </citation>
    <scope>NUCLEOTIDE SEQUENCE [LARGE SCALE GENOMIC DNA]</scope>
    <source>
        <strain>DSM 23117 / BGSC 10A6 / LMG 26770 / FZB42</strain>
    </source>
</reference>
<keyword id="KW-0687">Ribonucleoprotein</keyword>
<keyword id="KW-0689">Ribosomal protein</keyword>
<keyword id="KW-0694">RNA-binding</keyword>
<keyword id="KW-0699">rRNA-binding</keyword>
<organism>
    <name type="scientific">Bacillus velezensis (strain DSM 23117 / BGSC 10A6 / LMG 26770 / FZB42)</name>
    <name type="common">Bacillus amyloliquefaciens subsp. plantarum</name>
    <dbReference type="NCBI Taxonomy" id="326423"/>
    <lineage>
        <taxon>Bacteria</taxon>
        <taxon>Bacillati</taxon>
        <taxon>Bacillota</taxon>
        <taxon>Bacilli</taxon>
        <taxon>Bacillales</taxon>
        <taxon>Bacillaceae</taxon>
        <taxon>Bacillus</taxon>
        <taxon>Bacillus amyloliquefaciens group</taxon>
    </lineage>
</organism>
<name>RS18_BACVZ</name>
<sequence>MAGGRRGGRAKRRKVCYFTSNGITHIDYKDVDLLRKFVSERGKILPRRVTGTNAKYQRKLTIAIKRARQMALLPYVTGE</sequence>
<accession>A7ZAU7</accession>
<protein>
    <recommendedName>
        <fullName evidence="1">Small ribosomal subunit protein bS18</fullName>
    </recommendedName>
    <alternativeName>
        <fullName evidence="2">30S ribosomal protein S18</fullName>
    </alternativeName>
</protein>
<dbReference type="EMBL" id="CP000560">
    <property type="protein sequence ID" value="ABS76123.1"/>
    <property type="status" value="ALT_INIT"/>
    <property type="molecule type" value="Genomic_DNA"/>
</dbReference>
<dbReference type="RefSeq" id="WP_004392983.1">
    <property type="nucleotide sequence ID" value="NC_009725.2"/>
</dbReference>
<dbReference type="SMR" id="A7ZAU7"/>
<dbReference type="GeneID" id="93082932"/>
<dbReference type="KEGG" id="bay:RBAM_037980"/>
<dbReference type="HOGENOM" id="CLU_148710_2_2_9"/>
<dbReference type="Proteomes" id="UP000001120">
    <property type="component" value="Chromosome"/>
</dbReference>
<dbReference type="GO" id="GO:0022627">
    <property type="term" value="C:cytosolic small ribosomal subunit"/>
    <property type="evidence" value="ECO:0007669"/>
    <property type="project" value="TreeGrafter"/>
</dbReference>
<dbReference type="GO" id="GO:0070181">
    <property type="term" value="F:small ribosomal subunit rRNA binding"/>
    <property type="evidence" value="ECO:0007669"/>
    <property type="project" value="TreeGrafter"/>
</dbReference>
<dbReference type="GO" id="GO:0003735">
    <property type="term" value="F:structural constituent of ribosome"/>
    <property type="evidence" value="ECO:0007669"/>
    <property type="project" value="InterPro"/>
</dbReference>
<dbReference type="GO" id="GO:0006412">
    <property type="term" value="P:translation"/>
    <property type="evidence" value="ECO:0007669"/>
    <property type="project" value="UniProtKB-UniRule"/>
</dbReference>
<dbReference type="FunFam" id="4.10.640.10:FF:000003">
    <property type="entry name" value="30S ribosomal protein S18"/>
    <property type="match status" value="1"/>
</dbReference>
<dbReference type="Gene3D" id="4.10.640.10">
    <property type="entry name" value="Ribosomal protein S18"/>
    <property type="match status" value="1"/>
</dbReference>
<dbReference type="HAMAP" id="MF_00270">
    <property type="entry name" value="Ribosomal_bS18"/>
    <property type="match status" value="1"/>
</dbReference>
<dbReference type="InterPro" id="IPR001648">
    <property type="entry name" value="Ribosomal_bS18"/>
</dbReference>
<dbReference type="InterPro" id="IPR018275">
    <property type="entry name" value="Ribosomal_bS18_CS"/>
</dbReference>
<dbReference type="InterPro" id="IPR036870">
    <property type="entry name" value="Ribosomal_bS18_sf"/>
</dbReference>
<dbReference type="NCBIfam" id="TIGR00165">
    <property type="entry name" value="S18"/>
    <property type="match status" value="1"/>
</dbReference>
<dbReference type="PANTHER" id="PTHR13479">
    <property type="entry name" value="30S RIBOSOMAL PROTEIN S18"/>
    <property type="match status" value="1"/>
</dbReference>
<dbReference type="PANTHER" id="PTHR13479:SF40">
    <property type="entry name" value="SMALL RIBOSOMAL SUBUNIT PROTEIN BS18M"/>
    <property type="match status" value="1"/>
</dbReference>
<dbReference type="Pfam" id="PF01084">
    <property type="entry name" value="Ribosomal_S18"/>
    <property type="match status" value="1"/>
</dbReference>
<dbReference type="PRINTS" id="PR00974">
    <property type="entry name" value="RIBOSOMALS18"/>
</dbReference>
<dbReference type="SUPFAM" id="SSF46911">
    <property type="entry name" value="Ribosomal protein S18"/>
    <property type="match status" value="1"/>
</dbReference>
<dbReference type="PROSITE" id="PS00057">
    <property type="entry name" value="RIBOSOMAL_S18"/>
    <property type="match status" value="1"/>
</dbReference>